<dbReference type="EC" id="3.1.-.-" evidence="1"/>
<dbReference type="EMBL" id="CP001097">
    <property type="protein sequence ID" value="ACD90628.1"/>
    <property type="molecule type" value="Genomic_DNA"/>
</dbReference>
<dbReference type="RefSeq" id="WP_012466502.1">
    <property type="nucleotide sequence ID" value="NC_010803.1"/>
</dbReference>
<dbReference type="SMR" id="B3EDK3"/>
<dbReference type="STRING" id="290315.Clim_1583"/>
<dbReference type="KEGG" id="cli:Clim_1583"/>
<dbReference type="eggNOG" id="COG0319">
    <property type="taxonomic scope" value="Bacteria"/>
</dbReference>
<dbReference type="HOGENOM" id="CLU_106710_3_3_10"/>
<dbReference type="OrthoDB" id="9811984at2"/>
<dbReference type="Proteomes" id="UP000008841">
    <property type="component" value="Chromosome"/>
</dbReference>
<dbReference type="GO" id="GO:0005737">
    <property type="term" value="C:cytoplasm"/>
    <property type="evidence" value="ECO:0007669"/>
    <property type="project" value="UniProtKB-SubCell"/>
</dbReference>
<dbReference type="GO" id="GO:0004222">
    <property type="term" value="F:metalloendopeptidase activity"/>
    <property type="evidence" value="ECO:0007669"/>
    <property type="project" value="InterPro"/>
</dbReference>
<dbReference type="GO" id="GO:0004521">
    <property type="term" value="F:RNA endonuclease activity"/>
    <property type="evidence" value="ECO:0007669"/>
    <property type="project" value="UniProtKB-UniRule"/>
</dbReference>
<dbReference type="GO" id="GO:0008270">
    <property type="term" value="F:zinc ion binding"/>
    <property type="evidence" value="ECO:0007669"/>
    <property type="project" value="UniProtKB-UniRule"/>
</dbReference>
<dbReference type="GO" id="GO:0006364">
    <property type="term" value="P:rRNA processing"/>
    <property type="evidence" value="ECO:0007669"/>
    <property type="project" value="UniProtKB-UniRule"/>
</dbReference>
<dbReference type="Gene3D" id="3.40.390.30">
    <property type="entry name" value="Metalloproteases ('zincins'), catalytic domain"/>
    <property type="match status" value="1"/>
</dbReference>
<dbReference type="HAMAP" id="MF_00009">
    <property type="entry name" value="Endoribonucl_YbeY"/>
    <property type="match status" value="1"/>
</dbReference>
<dbReference type="InterPro" id="IPR023091">
    <property type="entry name" value="MetalPrtase_cat_dom_sf_prd"/>
</dbReference>
<dbReference type="InterPro" id="IPR002036">
    <property type="entry name" value="YbeY"/>
</dbReference>
<dbReference type="InterPro" id="IPR020549">
    <property type="entry name" value="YbeY_CS"/>
</dbReference>
<dbReference type="NCBIfam" id="TIGR00043">
    <property type="entry name" value="rRNA maturation RNase YbeY"/>
    <property type="match status" value="1"/>
</dbReference>
<dbReference type="Pfam" id="PF02130">
    <property type="entry name" value="YbeY"/>
    <property type="match status" value="1"/>
</dbReference>
<dbReference type="SUPFAM" id="SSF55486">
    <property type="entry name" value="Metalloproteases ('zincins'), catalytic domain"/>
    <property type="match status" value="1"/>
</dbReference>
<dbReference type="PROSITE" id="PS01306">
    <property type="entry name" value="UPF0054"/>
    <property type="match status" value="1"/>
</dbReference>
<name>YBEY_CHLL2</name>
<protein>
    <recommendedName>
        <fullName evidence="1">Endoribonuclease YbeY</fullName>
        <ecNumber evidence="1">3.1.-.-</ecNumber>
    </recommendedName>
</protein>
<gene>
    <name evidence="1" type="primary">ybeY</name>
    <name type="ordered locus">Clim_1583</name>
</gene>
<keyword id="KW-0963">Cytoplasm</keyword>
<keyword id="KW-0255">Endonuclease</keyword>
<keyword id="KW-0378">Hydrolase</keyword>
<keyword id="KW-0479">Metal-binding</keyword>
<keyword id="KW-0540">Nuclease</keyword>
<keyword id="KW-0690">Ribosome biogenesis</keyword>
<keyword id="KW-0698">rRNA processing</keyword>
<keyword id="KW-0862">Zinc</keyword>
<feature type="chain" id="PRO_1000089159" description="Endoribonuclease YbeY">
    <location>
        <begin position="1"/>
        <end position="144"/>
    </location>
</feature>
<feature type="binding site" evidence="1">
    <location>
        <position position="105"/>
    </location>
    <ligand>
        <name>Zn(2+)</name>
        <dbReference type="ChEBI" id="CHEBI:29105"/>
        <note>catalytic</note>
    </ligand>
</feature>
<feature type="binding site" evidence="1">
    <location>
        <position position="109"/>
    </location>
    <ligand>
        <name>Zn(2+)</name>
        <dbReference type="ChEBI" id="CHEBI:29105"/>
        <note>catalytic</note>
    </ligand>
</feature>
<feature type="binding site" evidence="1">
    <location>
        <position position="115"/>
    </location>
    <ligand>
        <name>Zn(2+)</name>
        <dbReference type="ChEBI" id="CHEBI:29105"/>
        <note>catalytic</note>
    </ligand>
</feature>
<reference key="1">
    <citation type="submission" date="2008-05" db="EMBL/GenBank/DDBJ databases">
        <title>Complete sequence of Chlorobium limicola DSM 245.</title>
        <authorList>
            <consortium name="US DOE Joint Genome Institute"/>
            <person name="Lucas S."/>
            <person name="Copeland A."/>
            <person name="Lapidus A."/>
            <person name="Glavina del Rio T."/>
            <person name="Dalin E."/>
            <person name="Tice H."/>
            <person name="Bruce D."/>
            <person name="Goodwin L."/>
            <person name="Pitluck S."/>
            <person name="Schmutz J."/>
            <person name="Larimer F."/>
            <person name="Land M."/>
            <person name="Hauser L."/>
            <person name="Kyrpides N."/>
            <person name="Ovchinnikova G."/>
            <person name="Zhao F."/>
            <person name="Li T."/>
            <person name="Liu Z."/>
            <person name="Overmann J."/>
            <person name="Bryant D.A."/>
            <person name="Richardson P."/>
        </authorList>
    </citation>
    <scope>NUCLEOTIDE SEQUENCE [LARGE SCALE GENOMIC DNA]</scope>
    <source>
        <strain>DSM 245 / NBRC 103803 / 6330</strain>
    </source>
</reference>
<comment type="function">
    <text evidence="1">Single strand-specific metallo-endoribonuclease involved in late-stage 70S ribosome quality control and in maturation of the 3' terminus of the 16S rRNA.</text>
</comment>
<comment type="cofactor">
    <cofactor evidence="1">
        <name>Zn(2+)</name>
        <dbReference type="ChEBI" id="CHEBI:29105"/>
    </cofactor>
    <text evidence="1">Binds 1 zinc ion.</text>
</comment>
<comment type="subcellular location">
    <subcellularLocation>
        <location evidence="1">Cytoplasm</location>
    </subcellularLocation>
</comment>
<comment type="similarity">
    <text evidence="1">Belongs to the endoribonuclease YbeY family.</text>
</comment>
<evidence type="ECO:0000255" key="1">
    <source>
        <dbReference type="HAMAP-Rule" id="MF_00009"/>
    </source>
</evidence>
<organism>
    <name type="scientific">Chlorobium limicola (strain DSM 245 / NBRC 103803 / 6330)</name>
    <dbReference type="NCBI Taxonomy" id="290315"/>
    <lineage>
        <taxon>Bacteria</taxon>
        <taxon>Pseudomonadati</taxon>
        <taxon>Chlorobiota</taxon>
        <taxon>Chlorobiia</taxon>
        <taxon>Chlorobiales</taxon>
        <taxon>Chlorobiaceae</taxon>
        <taxon>Chlorobium/Pelodictyon group</taxon>
        <taxon>Chlorobium</taxon>
    </lineage>
</organism>
<proteinExistence type="inferred from homology"/>
<sequence length="144" mass="17030">MPLQIFNTTRKELHEELLERTVIDVLDSEGFGVESIVAVYCGKKMIRKINREFLQHDYATDTITFRYSDNREIDGEFYISLDVIEENARRFEVDFKLELLRVTIHSALHLIGYDDQTVDGRLQMQQKEEFYLNRYSEANNQTPS</sequence>
<accession>B3EDK3</accession>